<organism>
    <name type="scientific">Chlorella vulgaris</name>
    <name type="common">Green alga</name>
    <dbReference type="NCBI Taxonomy" id="3077"/>
    <lineage>
        <taxon>Eukaryota</taxon>
        <taxon>Viridiplantae</taxon>
        <taxon>Chlorophyta</taxon>
        <taxon>core chlorophytes</taxon>
        <taxon>Trebouxiophyceae</taxon>
        <taxon>Chlorellales</taxon>
        <taxon>Chlorellaceae</taxon>
        <taxon>Chlorella clade</taxon>
        <taxon>Chlorella</taxon>
    </lineage>
</organism>
<comment type="function">
    <text>Produces ATP from ADP in the presence of a proton gradient across the membrane. The alpha chain is a regulatory subunit.</text>
</comment>
<comment type="catalytic activity">
    <reaction evidence="1">
        <text>ATP + H2O + 4 H(+)(in) = ADP + phosphate + 5 H(+)(out)</text>
        <dbReference type="Rhea" id="RHEA:57720"/>
        <dbReference type="ChEBI" id="CHEBI:15377"/>
        <dbReference type="ChEBI" id="CHEBI:15378"/>
        <dbReference type="ChEBI" id="CHEBI:30616"/>
        <dbReference type="ChEBI" id="CHEBI:43474"/>
        <dbReference type="ChEBI" id="CHEBI:456216"/>
        <dbReference type="EC" id="7.1.2.2"/>
    </reaction>
</comment>
<comment type="subunit">
    <text evidence="1">F-type ATPases have 2 components, CF(1) - the catalytic core - and CF(0) - the membrane proton channel. CF(1) has five subunits: alpha(3), beta(3), gamma(1), delta(1), epsilon(1). CF(0) has four main subunits: a, b, b' and c.</text>
</comment>
<comment type="subcellular location">
    <subcellularLocation>
        <location evidence="1">Plastid</location>
        <location evidence="1">Chloroplast thylakoid membrane</location>
        <topology evidence="1">Peripheral membrane protein</topology>
    </subcellularLocation>
</comment>
<comment type="similarity">
    <text evidence="1">Belongs to the ATPase alpha/beta chains family.</text>
</comment>
<dbReference type="EC" id="7.1.2.2" evidence="1"/>
<dbReference type="EMBL" id="AB001684">
    <property type="protein sequence ID" value="BAA57856.1"/>
    <property type="molecule type" value="Genomic_DNA"/>
</dbReference>
<dbReference type="PIR" id="T07209">
    <property type="entry name" value="T07209"/>
</dbReference>
<dbReference type="RefSeq" id="NP_045781.1">
    <property type="nucleotide sequence ID" value="NC_001865.1"/>
</dbReference>
<dbReference type="SMR" id="P56294"/>
<dbReference type="GeneID" id="809212"/>
<dbReference type="GO" id="GO:0009535">
    <property type="term" value="C:chloroplast thylakoid membrane"/>
    <property type="evidence" value="ECO:0007669"/>
    <property type="project" value="UniProtKB-SubCell"/>
</dbReference>
<dbReference type="GO" id="GO:0045259">
    <property type="term" value="C:proton-transporting ATP synthase complex"/>
    <property type="evidence" value="ECO:0007669"/>
    <property type="project" value="UniProtKB-KW"/>
</dbReference>
<dbReference type="GO" id="GO:0043531">
    <property type="term" value="F:ADP binding"/>
    <property type="evidence" value="ECO:0007669"/>
    <property type="project" value="TreeGrafter"/>
</dbReference>
<dbReference type="GO" id="GO:0005524">
    <property type="term" value="F:ATP binding"/>
    <property type="evidence" value="ECO:0007669"/>
    <property type="project" value="UniProtKB-UniRule"/>
</dbReference>
<dbReference type="GO" id="GO:0046933">
    <property type="term" value="F:proton-transporting ATP synthase activity, rotational mechanism"/>
    <property type="evidence" value="ECO:0007669"/>
    <property type="project" value="UniProtKB-UniRule"/>
</dbReference>
<dbReference type="CDD" id="cd18113">
    <property type="entry name" value="ATP-synt_F1_alpha_C"/>
    <property type="match status" value="1"/>
</dbReference>
<dbReference type="CDD" id="cd18116">
    <property type="entry name" value="ATP-synt_F1_alpha_N"/>
    <property type="match status" value="1"/>
</dbReference>
<dbReference type="CDD" id="cd01132">
    <property type="entry name" value="F1-ATPase_alpha_CD"/>
    <property type="match status" value="1"/>
</dbReference>
<dbReference type="FunFam" id="1.20.150.20:FF:000001">
    <property type="entry name" value="ATP synthase subunit alpha"/>
    <property type="match status" value="1"/>
</dbReference>
<dbReference type="FunFam" id="2.40.30.20:FF:000001">
    <property type="entry name" value="ATP synthase subunit alpha"/>
    <property type="match status" value="1"/>
</dbReference>
<dbReference type="FunFam" id="3.40.50.300:FF:000002">
    <property type="entry name" value="ATP synthase subunit alpha"/>
    <property type="match status" value="1"/>
</dbReference>
<dbReference type="Gene3D" id="2.40.30.20">
    <property type="match status" value="1"/>
</dbReference>
<dbReference type="Gene3D" id="1.20.150.20">
    <property type="entry name" value="ATP synthase alpha/beta chain, C-terminal domain"/>
    <property type="match status" value="1"/>
</dbReference>
<dbReference type="Gene3D" id="3.40.50.300">
    <property type="entry name" value="P-loop containing nucleotide triphosphate hydrolases"/>
    <property type="match status" value="1"/>
</dbReference>
<dbReference type="HAMAP" id="MF_01346">
    <property type="entry name" value="ATP_synth_alpha_bact"/>
    <property type="match status" value="1"/>
</dbReference>
<dbReference type="InterPro" id="IPR023366">
    <property type="entry name" value="ATP_synth_asu-like_sf"/>
</dbReference>
<dbReference type="InterPro" id="IPR000793">
    <property type="entry name" value="ATP_synth_asu_C"/>
</dbReference>
<dbReference type="InterPro" id="IPR038376">
    <property type="entry name" value="ATP_synth_asu_C_sf"/>
</dbReference>
<dbReference type="InterPro" id="IPR033732">
    <property type="entry name" value="ATP_synth_F1_a_nt-bd_dom"/>
</dbReference>
<dbReference type="InterPro" id="IPR005294">
    <property type="entry name" value="ATP_synth_F1_asu"/>
</dbReference>
<dbReference type="InterPro" id="IPR020003">
    <property type="entry name" value="ATPase_a/bsu_AS"/>
</dbReference>
<dbReference type="InterPro" id="IPR004100">
    <property type="entry name" value="ATPase_F1/V1/A1_a/bsu_N"/>
</dbReference>
<dbReference type="InterPro" id="IPR036121">
    <property type="entry name" value="ATPase_F1/V1/A1_a/bsu_N_sf"/>
</dbReference>
<dbReference type="InterPro" id="IPR000194">
    <property type="entry name" value="ATPase_F1/V1/A1_a/bsu_nucl-bd"/>
</dbReference>
<dbReference type="InterPro" id="IPR027417">
    <property type="entry name" value="P-loop_NTPase"/>
</dbReference>
<dbReference type="NCBIfam" id="TIGR00962">
    <property type="entry name" value="atpA"/>
    <property type="match status" value="1"/>
</dbReference>
<dbReference type="NCBIfam" id="NF009884">
    <property type="entry name" value="PRK13343.1"/>
    <property type="match status" value="1"/>
</dbReference>
<dbReference type="PANTHER" id="PTHR48082">
    <property type="entry name" value="ATP SYNTHASE SUBUNIT ALPHA, MITOCHONDRIAL"/>
    <property type="match status" value="1"/>
</dbReference>
<dbReference type="PANTHER" id="PTHR48082:SF2">
    <property type="entry name" value="ATP SYNTHASE SUBUNIT ALPHA, MITOCHONDRIAL"/>
    <property type="match status" value="1"/>
</dbReference>
<dbReference type="Pfam" id="PF00006">
    <property type="entry name" value="ATP-synt_ab"/>
    <property type="match status" value="1"/>
</dbReference>
<dbReference type="Pfam" id="PF00306">
    <property type="entry name" value="ATP-synt_ab_C"/>
    <property type="match status" value="1"/>
</dbReference>
<dbReference type="Pfam" id="PF02874">
    <property type="entry name" value="ATP-synt_ab_N"/>
    <property type="match status" value="1"/>
</dbReference>
<dbReference type="PIRSF" id="PIRSF039088">
    <property type="entry name" value="F_ATPase_subunit_alpha"/>
    <property type="match status" value="1"/>
</dbReference>
<dbReference type="SUPFAM" id="SSF47917">
    <property type="entry name" value="C-terminal domain of alpha and beta subunits of F1 ATP synthase"/>
    <property type="match status" value="1"/>
</dbReference>
<dbReference type="SUPFAM" id="SSF50615">
    <property type="entry name" value="N-terminal domain of alpha and beta subunits of F1 ATP synthase"/>
    <property type="match status" value="1"/>
</dbReference>
<dbReference type="SUPFAM" id="SSF52540">
    <property type="entry name" value="P-loop containing nucleoside triphosphate hydrolases"/>
    <property type="match status" value="1"/>
</dbReference>
<dbReference type="PROSITE" id="PS00152">
    <property type="entry name" value="ATPASE_ALPHA_BETA"/>
    <property type="match status" value="1"/>
</dbReference>
<gene>
    <name evidence="1" type="primary">atpA</name>
</gene>
<accession>P56294</accession>
<keyword id="KW-0066">ATP synthesis</keyword>
<keyword id="KW-0067">ATP-binding</keyword>
<keyword id="KW-0139">CF(1)</keyword>
<keyword id="KW-0150">Chloroplast</keyword>
<keyword id="KW-0375">Hydrogen ion transport</keyword>
<keyword id="KW-0406">Ion transport</keyword>
<keyword id="KW-0472">Membrane</keyword>
<keyword id="KW-0547">Nucleotide-binding</keyword>
<keyword id="KW-0934">Plastid</keyword>
<keyword id="KW-0793">Thylakoid</keyword>
<keyword id="KW-1278">Translocase</keyword>
<keyword id="KW-0813">Transport</keyword>
<sequence>MVKIRPDEISSIIKQQIEQYQQEVKAVNVGTVFQVGDGIARIYGLDKVMAGELVEFEDGTVGIALNLEAKNVGAVLMGEGTRVQEGSSVRATGKIAQIPVGDGYLGRVVNSLARPIDGKGEIATKENRLIESPAPGIISRRSVHEPLQTGIVAIDAMIPIGRGQRELIIGDRQTGKTAIAVDTILNQKGKDVVCVYVAIGQKASSIAQVVNTLQERGAMDYTIIVAATADSPATLQYLSPYTGAALAEYFMYTGRHTLVIYDDLTKQAQAYREMSLLLRRPPGREAYPGDVFYLHSRLLERAAKLNDKLGSGSMTALPVVETQEGDVSAYIPTNVISITDGQIFLSADIFNAGIRPAINVGISVSRVGSAAQPKAMKQVAGKLKLELAQFAELEAFSQFASDLDQATQNQLARGQRLRELLKQSQSSPLSLEDQVASIYAGTNGYLDVLPADRVRAFLVGLRQYLATNKAKYGEILRSTNALTDEAQTLLKEALKEYTEEFLASAK</sequence>
<proteinExistence type="inferred from homology"/>
<feature type="chain" id="PRO_0000144373" description="ATP synthase subunit alpha, chloroplastic">
    <location>
        <begin position="1"/>
        <end position="506"/>
    </location>
</feature>
<feature type="binding site" evidence="1">
    <location>
        <begin position="170"/>
        <end position="177"/>
    </location>
    <ligand>
        <name>ATP</name>
        <dbReference type="ChEBI" id="CHEBI:30616"/>
    </ligand>
</feature>
<feature type="site" description="Required for activity" evidence="1">
    <location>
        <position position="363"/>
    </location>
</feature>
<evidence type="ECO:0000255" key="1">
    <source>
        <dbReference type="HAMAP-Rule" id="MF_01346"/>
    </source>
</evidence>
<reference key="1">
    <citation type="journal article" date="1997" name="Proc. Natl. Acad. Sci. U.S.A.">
        <title>Complete nucleotide sequence of the chloroplast genome from the green alga Chlorella vulgaris: the existence of genes possibly involved in chloroplast division.</title>
        <authorList>
            <person name="Wakasugi T."/>
            <person name="Nagai T."/>
            <person name="Kapoor M."/>
            <person name="Sugita M."/>
            <person name="Ito M."/>
            <person name="Ito S."/>
            <person name="Tsudzuki J."/>
            <person name="Nakashima K."/>
            <person name="Tsudzuki T."/>
            <person name="Suzuki Y."/>
            <person name="Hamada A."/>
            <person name="Ohta T."/>
            <person name="Inamura A."/>
            <person name="Yoshinaga K."/>
            <person name="Sugiura M."/>
        </authorList>
    </citation>
    <scope>NUCLEOTIDE SEQUENCE [LARGE SCALE GENOMIC DNA]</scope>
    <source>
        <strain>IAM C-27 / Tamiya</strain>
    </source>
</reference>
<protein>
    <recommendedName>
        <fullName evidence="1">ATP synthase subunit alpha, chloroplastic</fullName>
        <ecNumber evidence="1">7.1.2.2</ecNumber>
    </recommendedName>
    <alternativeName>
        <fullName evidence="1">ATP synthase F1 sector subunit alpha</fullName>
    </alternativeName>
    <alternativeName>
        <fullName evidence="1">F-ATPase subunit alpha</fullName>
    </alternativeName>
</protein>
<name>ATPA_CHLVU</name>
<geneLocation type="chloroplast"/>